<keyword id="KW-0903">Direct protein sequencing</keyword>
<keyword id="KW-1015">Disulfide bond</keyword>
<keyword id="KW-0960">Knottin</keyword>
<keyword id="KW-0611">Plant defense</keyword>
<comment type="function">
    <text evidence="1 2">Probably participates in a plant defense mechanism.</text>
</comment>
<comment type="tissue specificity">
    <text evidence="3">Expressed in stem, shoot, root, leaf, pod and nodule but not in flower and seed (at protein level).</text>
</comment>
<comment type="domain">
    <text evidence="5">The presence of a 'disulfide through disulfide knot' structurally defines this protein as a knottin.</text>
</comment>
<comment type="PTM">
    <text evidence="3">Contains 3 disulfide bonds.</text>
</comment>
<comment type="PTM">
    <text evidence="2 3">This is a cyclic peptide.</text>
</comment>
<comment type="mass spectrometry"/>
<comment type="similarity">
    <text evidence="2">Belongs to the cyclotide family. Bracelet subfamily.</text>
</comment>
<sequence>GIPCGESCVFIPCISTVIGCSCKNKVCYRNHVIAAEAKTMDDHHLLCQSHEDCITKGTGNFCAPFPDQDIKYGWCFRAESEGFMLKDHLKMSITN</sequence>
<name>CYC5_CLITE</name>
<dbReference type="EMBL" id="JF931992">
    <property type="protein sequence ID" value="AEK26406.1"/>
    <property type="molecule type" value="mRNA"/>
</dbReference>
<dbReference type="SMR" id="G1CWH4"/>
<dbReference type="GO" id="GO:0006952">
    <property type="term" value="P:defense response"/>
    <property type="evidence" value="ECO:0007669"/>
    <property type="project" value="UniProtKB-KW"/>
</dbReference>
<dbReference type="InterPro" id="IPR032000">
    <property type="entry name" value="Albumin_I_a"/>
</dbReference>
<dbReference type="InterPro" id="IPR005535">
    <property type="entry name" value="Cyclotide"/>
</dbReference>
<dbReference type="InterPro" id="IPR012323">
    <property type="entry name" value="Cyclotide_bracelet_CS"/>
</dbReference>
<dbReference type="InterPro" id="IPR036146">
    <property type="entry name" value="Cyclotide_sf"/>
</dbReference>
<dbReference type="Pfam" id="PF16720">
    <property type="entry name" value="Albumin_I_a"/>
    <property type="match status" value="1"/>
</dbReference>
<dbReference type="Pfam" id="PF03784">
    <property type="entry name" value="Cyclotide"/>
    <property type="match status" value="1"/>
</dbReference>
<dbReference type="SUPFAM" id="SSF57038">
    <property type="entry name" value="Cyclotides"/>
    <property type="match status" value="1"/>
</dbReference>
<dbReference type="PROSITE" id="PS51052">
    <property type="entry name" value="CYCLOTIDE"/>
    <property type="match status" value="1"/>
</dbReference>
<dbReference type="PROSITE" id="PS60008">
    <property type="entry name" value="CYCLOTIDE_BRACELET"/>
    <property type="match status" value="1"/>
</dbReference>
<evidence type="ECO:0000255" key="1"/>
<evidence type="ECO:0000255" key="2">
    <source>
        <dbReference type="PROSITE-ProRule" id="PRU00395"/>
    </source>
</evidence>
<evidence type="ECO:0000269" key="3">
    <source>
    </source>
</evidence>
<evidence type="ECO:0000303" key="4">
    <source>
    </source>
</evidence>
<evidence type="ECO:0000305" key="5"/>
<evidence type="ECO:0000312" key="6">
    <source>
        <dbReference type="EMBL" id="AEK26406.1"/>
    </source>
</evidence>
<reference evidence="6" key="1">
    <citation type="journal article" date="2011" name="J. Biol. Chem.">
        <title>Discovery and characterization of novel cyclotides originated from chimeric precursors consisting of albumin-1 chain a and cyclotide domains in the fabaceae family.</title>
        <authorList>
            <person name="Nguyen G.K."/>
            <person name="Zhang S."/>
            <person name="Nguyen N.T."/>
            <person name="Nguyen P.Q."/>
            <person name="Chiu M.S."/>
            <person name="Hardjojo A."/>
            <person name="Tam J.P."/>
        </authorList>
    </citation>
    <scope>NUCLEOTIDE SEQUENCE [MRNA] OF 2-95</scope>
    <scope>PROTEIN SEQUENCE OF 1-30</scope>
    <scope>PRESENCE OF DISULFIDE BONDS</scope>
    <scope>CYCLIZATION</scope>
    <scope>TISSUE SPECIFICITY</scope>
    <scope>MASS SPECTROMETRY</scope>
    <scope>IDENTIFICATION BY MASS SPECTROMETRY</scope>
</reference>
<feature type="peptide" id="PRO_0000440055" description="Cliotide T5" evidence="3">
    <location>
        <begin position="1"/>
        <end position="30"/>
    </location>
</feature>
<feature type="propeptide" id="PRO_0000440056" description="Removed in mature form" evidence="3">
    <location>
        <begin position="31"/>
        <end position="95"/>
    </location>
</feature>
<feature type="disulfide bond" evidence="2">
    <location>
        <begin position="4"/>
        <end position="20"/>
    </location>
</feature>
<feature type="disulfide bond" evidence="2">
    <location>
        <begin position="8"/>
        <end position="22"/>
    </location>
</feature>
<feature type="disulfide bond" evidence="2">
    <location>
        <begin position="13"/>
        <end position="27"/>
    </location>
</feature>
<feature type="cross-link" description="Cyclopeptide (Gly-Asn)" evidence="3">
    <location>
        <begin position="1"/>
        <end position="30"/>
    </location>
</feature>
<feature type="non-terminal residue" evidence="4">
    <location>
        <position position="1"/>
    </location>
</feature>
<protein>
    <recommendedName>
        <fullName evidence="4">Cliotide T5</fullName>
    </recommendedName>
</protein>
<proteinExistence type="evidence at protein level"/>
<organism evidence="6">
    <name type="scientific">Clitoria ternatea</name>
    <name type="common">Butterfly pea</name>
    <dbReference type="NCBI Taxonomy" id="43366"/>
    <lineage>
        <taxon>Eukaryota</taxon>
        <taxon>Viridiplantae</taxon>
        <taxon>Streptophyta</taxon>
        <taxon>Embryophyta</taxon>
        <taxon>Tracheophyta</taxon>
        <taxon>Spermatophyta</taxon>
        <taxon>Magnoliopsida</taxon>
        <taxon>eudicotyledons</taxon>
        <taxon>Gunneridae</taxon>
        <taxon>Pentapetalae</taxon>
        <taxon>rosids</taxon>
        <taxon>fabids</taxon>
        <taxon>Fabales</taxon>
        <taxon>Fabaceae</taxon>
        <taxon>Papilionoideae</taxon>
        <taxon>50 kb inversion clade</taxon>
        <taxon>NPAAA clade</taxon>
        <taxon>indigoferoid/millettioid clade</taxon>
        <taxon>Phaseoleae</taxon>
        <taxon>Clitoria</taxon>
    </lineage>
</organism>
<accession>G1CWH4</accession>